<accession>P55560</accession>
<name>Y4MA_SINFN</name>
<proteinExistence type="predicted"/>
<sequence>MSKAIRIARLTSATCEQIQARMLEACRQIASDHGLVIESAGWRGLEPGFSFEPAFRISIPAPDGKPLNLDREMFAVLAEQYGLEAADFEREFIAGGERFRITGIDPRRPKYPISVERIPDHRGFKFTADNVAMLLKAQAKP</sequence>
<keyword id="KW-0614">Plasmid</keyword>
<keyword id="KW-1185">Reference proteome</keyword>
<protein>
    <recommendedName>
        <fullName>Uncharacterized protein y4mA</fullName>
    </recommendedName>
</protein>
<reference key="1">
    <citation type="journal article" date="1997" name="Nature">
        <title>Molecular basis of symbiosis between Rhizobium and legumes.</title>
        <authorList>
            <person name="Freiberg C.A."/>
            <person name="Fellay R."/>
            <person name="Bairoch A."/>
            <person name="Broughton W.J."/>
            <person name="Rosenthal A."/>
            <person name="Perret X."/>
        </authorList>
    </citation>
    <scope>NUCLEOTIDE SEQUENCE [LARGE SCALE GENOMIC DNA]</scope>
    <source>
        <strain>NBRC 101917 / NGR234</strain>
    </source>
</reference>
<reference key="2">
    <citation type="journal article" date="2009" name="Appl. Environ. Microbiol.">
        <title>Rhizobium sp. strain NGR234 possesses a remarkable number of secretion systems.</title>
        <authorList>
            <person name="Schmeisser C."/>
            <person name="Liesegang H."/>
            <person name="Krysciak D."/>
            <person name="Bakkou N."/>
            <person name="Le Quere A."/>
            <person name="Wollherr A."/>
            <person name="Heinemeyer I."/>
            <person name="Morgenstern B."/>
            <person name="Pommerening-Roeser A."/>
            <person name="Flores M."/>
            <person name="Palacios R."/>
            <person name="Brenner S."/>
            <person name="Gottschalk G."/>
            <person name="Schmitz R.A."/>
            <person name="Broughton W.J."/>
            <person name="Perret X."/>
            <person name="Strittmatter A.W."/>
            <person name="Streit W.R."/>
        </authorList>
    </citation>
    <scope>NUCLEOTIDE SEQUENCE [LARGE SCALE GENOMIC DNA]</scope>
    <source>
        <strain>NBRC 101917 / NGR234</strain>
    </source>
</reference>
<organism>
    <name type="scientific">Sinorhizobium fredii (strain NBRC 101917 / NGR234)</name>
    <dbReference type="NCBI Taxonomy" id="394"/>
    <lineage>
        <taxon>Bacteria</taxon>
        <taxon>Pseudomonadati</taxon>
        <taxon>Pseudomonadota</taxon>
        <taxon>Alphaproteobacteria</taxon>
        <taxon>Hyphomicrobiales</taxon>
        <taxon>Rhizobiaceae</taxon>
        <taxon>Sinorhizobium/Ensifer group</taxon>
        <taxon>Sinorhizobium</taxon>
    </lineage>
</organism>
<gene>
    <name type="ordered locus">NGR_a02580</name>
    <name type="ORF">y4mA</name>
</gene>
<feature type="chain" id="PRO_0000200910" description="Uncharacterized protein y4mA">
    <location>
        <begin position="1"/>
        <end position="141"/>
    </location>
</feature>
<geneLocation type="plasmid">
    <name>sym pNGR234a</name>
</geneLocation>
<dbReference type="EMBL" id="U00090">
    <property type="protein sequence ID" value="AAB92462.1"/>
    <property type="molecule type" value="Genomic_DNA"/>
</dbReference>
<dbReference type="RefSeq" id="NP_443967.1">
    <property type="nucleotide sequence ID" value="NC_000914.2"/>
</dbReference>
<dbReference type="RefSeq" id="WP_010875283.1">
    <property type="nucleotide sequence ID" value="NC_000914.2"/>
</dbReference>
<dbReference type="KEGG" id="rhi:NGR_a02580"/>
<dbReference type="PATRIC" id="fig|394.7.peg.273"/>
<dbReference type="eggNOG" id="ENOG5031C5N">
    <property type="taxonomic scope" value="Bacteria"/>
</dbReference>
<dbReference type="HOGENOM" id="CLU_1823075_0_0_5"/>
<dbReference type="OrthoDB" id="8080557at2"/>
<dbReference type="Proteomes" id="UP000001054">
    <property type="component" value="Plasmid pNGR234a"/>
</dbReference>